<dbReference type="EC" id="3.4.25.2" evidence="1"/>
<dbReference type="EMBL" id="AM999887">
    <property type="protein sequence ID" value="CAQ54862.1"/>
    <property type="molecule type" value="Genomic_DNA"/>
</dbReference>
<dbReference type="RefSeq" id="WP_012481904.1">
    <property type="nucleotide sequence ID" value="NC_010981.1"/>
</dbReference>
<dbReference type="SMR" id="B3CLU4"/>
<dbReference type="MEROPS" id="T01.006"/>
<dbReference type="KEGG" id="wpi:WP0754"/>
<dbReference type="eggNOG" id="COG5405">
    <property type="taxonomic scope" value="Bacteria"/>
</dbReference>
<dbReference type="HOGENOM" id="CLU_093872_1_0_5"/>
<dbReference type="Proteomes" id="UP000008814">
    <property type="component" value="Chromosome"/>
</dbReference>
<dbReference type="GO" id="GO:0009376">
    <property type="term" value="C:HslUV protease complex"/>
    <property type="evidence" value="ECO:0007669"/>
    <property type="project" value="UniProtKB-UniRule"/>
</dbReference>
<dbReference type="GO" id="GO:0005839">
    <property type="term" value="C:proteasome core complex"/>
    <property type="evidence" value="ECO:0007669"/>
    <property type="project" value="InterPro"/>
</dbReference>
<dbReference type="GO" id="GO:0046872">
    <property type="term" value="F:metal ion binding"/>
    <property type="evidence" value="ECO:0007669"/>
    <property type="project" value="UniProtKB-KW"/>
</dbReference>
<dbReference type="GO" id="GO:0004298">
    <property type="term" value="F:threonine-type endopeptidase activity"/>
    <property type="evidence" value="ECO:0007669"/>
    <property type="project" value="UniProtKB-KW"/>
</dbReference>
<dbReference type="GO" id="GO:0051603">
    <property type="term" value="P:proteolysis involved in protein catabolic process"/>
    <property type="evidence" value="ECO:0007669"/>
    <property type="project" value="InterPro"/>
</dbReference>
<dbReference type="CDD" id="cd01913">
    <property type="entry name" value="protease_HslV"/>
    <property type="match status" value="1"/>
</dbReference>
<dbReference type="FunFam" id="3.60.20.10:FF:000002">
    <property type="entry name" value="ATP-dependent protease subunit HslV"/>
    <property type="match status" value="1"/>
</dbReference>
<dbReference type="Gene3D" id="3.60.20.10">
    <property type="entry name" value="Glutamine Phosphoribosylpyrophosphate, subunit 1, domain 1"/>
    <property type="match status" value="1"/>
</dbReference>
<dbReference type="HAMAP" id="MF_00248">
    <property type="entry name" value="HslV"/>
    <property type="match status" value="1"/>
</dbReference>
<dbReference type="InterPro" id="IPR022281">
    <property type="entry name" value="ATP-dep_Prtase_HsIV_su"/>
</dbReference>
<dbReference type="InterPro" id="IPR029055">
    <property type="entry name" value="Ntn_hydrolases_N"/>
</dbReference>
<dbReference type="InterPro" id="IPR001353">
    <property type="entry name" value="Proteasome_sua/b"/>
</dbReference>
<dbReference type="InterPro" id="IPR023333">
    <property type="entry name" value="Proteasome_suB-type"/>
</dbReference>
<dbReference type="NCBIfam" id="TIGR03692">
    <property type="entry name" value="ATP_dep_HslV"/>
    <property type="match status" value="1"/>
</dbReference>
<dbReference type="NCBIfam" id="NF003964">
    <property type="entry name" value="PRK05456.1"/>
    <property type="match status" value="1"/>
</dbReference>
<dbReference type="PANTHER" id="PTHR32194:SF7">
    <property type="entry name" value="ATP-DEPENDENT PROTEASE SUBUNIT HSLV"/>
    <property type="match status" value="1"/>
</dbReference>
<dbReference type="PANTHER" id="PTHR32194">
    <property type="entry name" value="METALLOPROTEASE TLDD"/>
    <property type="match status" value="1"/>
</dbReference>
<dbReference type="Pfam" id="PF00227">
    <property type="entry name" value="Proteasome"/>
    <property type="match status" value="1"/>
</dbReference>
<dbReference type="PIRSF" id="PIRSF039093">
    <property type="entry name" value="HslV"/>
    <property type="match status" value="1"/>
</dbReference>
<dbReference type="SUPFAM" id="SSF56235">
    <property type="entry name" value="N-terminal nucleophile aminohydrolases (Ntn hydrolases)"/>
    <property type="match status" value="1"/>
</dbReference>
<dbReference type="PROSITE" id="PS51476">
    <property type="entry name" value="PROTEASOME_BETA_2"/>
    <property type="match status" value="1"/>
</dbReference>
<protein>
    <recommendedName>
        <fullName evidence="1">ATP-dependent protease subunit HslV</fullName>
        <ecNumber evidence="1">3.4.25.2</ecNumber>
    </recommendedName>
</protein>
<name>HSLV_WOLPP</name>
<organism>
    <name type="scientific">Wolbachia pipientis subsp. Culex pipiens (strain wPip)</name>
    <dbReference type="NCBI Taxonomy" id="570417"/>
    <lineage>
        <taxon>Bacteria</taxon>
        <taxon>Pseudomonadati</taxon>
        <taxon>Pseudomonadota</taxon>
        <taxon>Alphaproteobacteria</taxon>
        <taxon>Rickettsiales</taxon>
        <taxon>Anaplasmataceae</taxon>
        <taxon>Wolbachieae</taxon>
        <taxon>Wolbachia</taxon>
    </lineage>
</organism>
<proteinExistence type="inferred from homology"/>
<keyword id="KW-0021">Allosteric enzyme</keyword>
<keyword id="KW-0963">Cytoplasm</keyword>
<keyword id="KW-0378">Hydrolase</keyword>
<keyword id="KW-0479">Metal-binding</keyword>
<keyword id="KW-0645">Protease</keyword>
<keyword id="KW-0915">Sodium</keyword>
<keyword id="KW-0346">Stress response</keyword>
<keyword id="KW-0888">Threonine protease</keyword>
<gene>
    <name evidence="1" type="primary">hslV</name>
    <name type="ordered locus">WP0754</name>
</gene>
<accession>B3CLU4</accession>
<feature type="chain" id="PRO_1000192688" description="ATP-dependent protease subunit HslV">
    <location>
        <begin position="1"/>
        <end position="184"/>
    </location>
</feature>
<feature type="active site" evidence="1">
    <location>
        <position position="12"/>
    </location>
</feature>
<feature type="binding site" evidence="1">
    <location>
        <position position="167"/>
    </location>
    <ligand>
        <name>Na(+)</name>
        <dbReference type="ChEBI" id="CHEBI:29101"/>
    </ligand>
</feature>
<feature type="binding site" evidence="1">
    <location>
        <position position="170"/>
    </location>
    <ligand>
        <name>Na(+)</name>
        <dbReference type="ChEBI" id="CHEBI:29101"/>
    </ligand>
</feature>
<feature type="binding site" evidence="1">
    <location>
        <position position="173"/>
    </location>
    <ligand>
        <name>Na(+)</name>
        <dbReference type="ChEBI" id="CHEBI:29101"/>
    </ligand>
</feature>
<reference key="1">
    <citation type="journal article" date="2008" name="Mol. Biol. Evol.">
        <title>Genome evolution of Wolbachia strain wPip from the Culex pipiens group.</title>
        <authorList>
            <person name="Klasson L."/>
            <person name="Walker T."/>
            <person name="Sebaihia M."/>
            <person name="Sanders M.J."/>
            <person name="Quail M.A."/>
            <person name="Lord A."/>
            <person name="Sanders S."/>
            <person name="Earl J."/>
            <person name="O'Neill S.L."/>
            <person name="Thomson N."/>
            <person name="Sinkins S.P."/>
            <person name="Parkhill J."/>
        </authorList>
    </citation>
    <scope>NUCLEOTIDE SEQUENCE [LARGE SCALE GENOMIC DNA]</scope>
    <source>
        <strain>wPip</strain>
    </source>
</reference>
<comment type="function">
    <text evidence="1">Protease subunit of a proteasome-like degradation complex believed to be a general protein degrading machinery.</text>
</comment>
<comment type="catalytic activity">
    <reaction evidence="1">
        <text>ATP-dependent cleavage of peptide bonds with broad specificity.</text>
        <dbReference type="EC" id="3.4.25.2"/>
    </reaction>
</comment>
<comment type="activity regulation">
    <text evidence="1">Allosterically activated by HslU binding.</text>
</comment>
<comment type="subunit">
    <text evidence="1">A double ring-shaped homohexamer of HslV is capped on each side by a ring-shaped HslU homohexamer. The assembly of the HslU/HslV complex is dependent on binding of ATP.</text>
</comment>
<comment type="subcellular location">
    <subcellularLocation>
        <location evidence="1">Cytoplasm</location>
    </subcellularLocation>
</comment>
<comment type="similarity">
    <text evidence="1">Belongs to the peptidase T1B family. HslV subfamily.</text>
</comment>
<evidence type="ECO:0000255" key="1">
    <source>
        <dbReference type="HAMAP-Rule" id="MF_00248"/>
    </source>
</evidence>
<sequence length="184" mass="19898">MIHHDSSKMYGTTILSIRRDKNVVVIGDGQVSLGHTVIKSGARKVRRLSGDSVIAGFAGATADAFTLFERLESKLDKHPGQLMRACVELAKDWRMDKYLRKLEAMMIVADKSISLVITGTGDVLEPEDGIAAIGSGGNFALSAAKALIDVEGISIEEIAKKAMKIAADICVYTNHNLIIEKIEE</sequence>